<comment type="function">
    <text evidence="1">Catalyzes the hydrolysis of 6-phosphogluconolactone to 6-phosphogluconate.</text>
</comment>
<comment type="catalytic activity">
    <reaction evidence="1">
        <text>6-phospho-D-glucono-1,5-lactone + H2O = 6-phospho-D-gluconate + H(+)</text>
        <dbReference type="Rhea" id="RHEA:12556"/>
        <dbReference type="ChEBI" id="CHEBI:15377"/>
        <dbReference type="ChEBI" id="CHEBI:15378"/>
        <dbReference type="ChEBI" id="CHEBI:57955"/>
        <dbReference type="ChEBI" id="CHEBI:58759"/>
        <dbReference type="EC" id="3.1.1.31"/>
    </reaction>
</comment>
<comment type="pathway">
    <text evidence="1">Carbohydrate degradation; pentose phosphate pathway; D-ribulose 5-phosphate from D-glucose 6-phosphate (oxidative stage): step 2/3.</text>
</comment>
<comment type="similarity">
    <text evidence="1">Belongs to the cycloisomerase 2 family.</text>
</comment>
<gene>
    <name evidence="1" type="primary">pgl</name>
    <name type="ordered locus">Ecok1_06550</name>
    <name type="ORF">APECO1_1322</name>
</gene>
<dbReference type="EC" id="3.1.1.31" evidence="1"/>
<dbReference type="EMBL" id="CP000468">
    <property type="protein sequence ID" value="ABJ00149.1"/>
    <property type="molecule type" value="Genomic_DNA"/>
</dbReference>
<dbReference type="RefSeq" id="WP_000815414.1">
    <property type="nucleotide sequence ID" value="NZ_CADILS010000026.1"/>
</dbReference>
<dbReference type="SMR" id="A1A909"/>
<dbReference type="KEGG" id="ecv:APECO1_1322"/>
<dbReference type="HOGENOM" id="CLU_038716_2_0_6"/>
<dbReference type="UniPathway" id="UPA00115">
    <property type="reaction ID" value="UER00409"/>
</dbReference>
<dbReference type="Proteomes" id="UP000008216">
    <property type="component" value="Chromosome"/>
</dbReference>
<dbReference type="GO" id="GO:0005829">
    <property type="term" value="C:cytosol"/>
    <property type="evidence" value="ECO:0007669"/>
    <property type="project" value="TreeGrafter"/>
</dbReference>
<dbReference type="GO" id="GO:0017057">
    <property type="term" value="F:6-phosphogluconolactonase activity"/>
    <property type="evidence" value="ECO:0007669"/>
    <property type="project" value="UniProtKB-UniRule"/>
</dbReference>
<dbReference type="GO" id="GO:0006006">
    <property type="term" value="P:glucose metabolic process"/>
    <property type="evidence" value="ECO:0007669"/>
    <property type="project" value="UniProtKB-KW"/>
</dbReference>
<dbReference type="GO" id="GO:0009051">
    <property type="term" value="P:pentose-phosphate shunt, oxidative branch"/>
    <property type="evidence" value="ECO:0007669"/>
    <property type="project" value="UniProtKB-UniRule"/>
</dbReference>
<dbReference type="FunFam" id="2.130.10.10:FF:000051">
    <property type="entry name" value="6-phosphogluconolactonase"/>
    <property type="match status" value="1"/>
</dbReference>
<dbReference type="Gene3D" id="2.130.10.10">
    <property type="entry name" value="YVTN repeat-like/Quinoprotein amine dehydrogenase"/>
    <property type="match status" value="1"/>
</dbReference>
<dbReference type="HAMAP" id="MF_01605">
    <property type="entry name" value="6P_gluconolactonase"/>
    <property type="match status" value="1"/>
</dbReference>
<dbReference type="InterPro" id="IPR022528">
    <property type="entry name" value="6-phosphogluconolactonase_YbhE"/>
</dbReference>
<dbReference type="InterPro" id="IPR050282">
    <property type="entry name" value="Cycloisomerase_2"/>
</dbReference>
<dbReference type="InterPro" id="IPR019405">
    <property type="entry name" value="Lactonase_7-beta_prop"/>
</dbReference>
<dbReference type="InterPro" id="IPR011045">
    <property type="entry name" value="N2O_reductase_N"/>
</dbReference>
<dbReference type="InterPro" id="IPR015943">
    <property type="entry name" value="WD40/YVTN_repeat-like_dom_sf"/>
</dbReference>
<dbReference type="NCBIfam" id="NF008258">
    <property type="entry name" value="PRK11028.1"/>
    <property type="match status" value="1"/>
</dbReference>
<dbReference type="PANTHER" id="PTHR30344:SF1">
    <property type="entry name" value="6-PHOSPHOGLUCONOLACTONASE"/>
    <property type="match status" value="1"/>
</dbReference>
<dbReference type="PANTHER" id="PTHR30344">
    <property type="entry name" value="6-PHOSPHOGLUCONOLACTONASE-RELATED"/>
    <property type="match status" value="1"/>
</dbReference>
<dbReference type="Pfam" id="PF10282">
    <property type="entry name" value="Lactonase"/>
    <property type="match status" value="1"/>
</dbReference>
<dbReference type="SUPFAM" id="SSF50974">
    <property type="entry name" value="Nitrous oxide reductase, N-terminal domain"/>
    <property type="match status" value="1"/>
</dbReference>
<organism>
    <name type="scientific">Escherichia coli O1:K1 / APEC</name>
    <dbReference type="NCBI Taxonomy" id="405955"/>
    <lineage>
        <taxon>Bacteria</taxon>
        <taxon>Pseudomonadati</taxon>
        <taxon>Pseudomonadota</taxon>
        <taxon>Gammaproteobacteria</taxon>
        <taxon>Enterobacterales</taxon>
        <taxon>Enterobacteriaceae</taxon>
        <taxon>Escherichia</taxon>
    </lineage>
</organism>
<sequence>MKQTVYIASPESQQIHVWNLNHEGALTLTQVVDVPGQVQPMVVSPDKRYLYVGVRPEFRVLAYRIAPDDGALTFAAESALPGSPTHISTDHLGQFVFVGSYNAGNVSVTRLEDGLPVGVVDVVEGLDGCHSANISPDNRTLWVPALKQDRICLFTVSDDGHLVAQDPAEVTTVEGAGPRHMVFHPNEQYAYCVNELNSSVDVWELKDPHGNIECVQTLDMMPENFSDTRWAADIHITPDGRHLYACDRTASLITVFSVSEDGSVLSKEGFQPTETQPRGFNVDHSGKYLIAAGQKSHHISVYEIVGEQGLLHEKGRYAVGQGPMWVVVNAH</sequence>
<feature type="chain" id="PRO_0000291466" description="6-phosphogluconolactonase">
    <location>
        <begin position="1"/>
        <end position="331"/>
    </location>
</feature>
<feature type="modified residue" description="N6-acetyllysine" evidence="1">
    <location>
        <position position="287"/>
    </location>
</feature>
<accession>A1A909</accession>
<keyword id="KW-0007">Acetylation</keyword>
<keyword id="KW-0119">Carbohydrate metabolism</keyword>
<keyword id="KW-0313">Glucose metabolism</keyword>
<keyword id="KW-0378">Hydrolase</keyword>
<keyword id="KW-1185">Reference proteome</keyword>
<reference key="1">
    <citation type="journal article" date="2007" name="J. Bacteriol.">
        <title>The genome sequence of avian pathogenic Escherichia coli strain O1:K1:H7 shares strong similarities with human extraintestinal pathogenic E. coli genomes.</title>
        <authorList>
            <person name="Johnson T.J."/>
            <person name="Kariyawasam S."/>
            <person name="Wannemuehler Y."/>
            <person name="Mangiamele P."/>
            <person name="Johnson S.J."/>
            <person name="Doetkott C."/>
            <person name="Skyberg J.A."/>
            <person name="Lynne A.M."/>
            <person name="Johnson J.R."/>
            <person name="Nolan L.K."/>
        </authorList>
    </citation>
    <scope>NUCLEOTIDE SEQUENCE [LARGE SCALE GENOMIC DNA]</scope>
</reference>
<name>6PGL_ECOK1</name>
<protein>
    <recommendedName>
        <fullName evidence="1">6-phosphogluconolactonase</fullName>
        <shortName evidence="1">6-P-gluconolactonase</shortName>
        <ecNumber evidence="1">3.1.1.31</ecNumber>
    </recommendedName>
</protein>
<evidence type="ECO:0000255" key="1">
    <source>
        <dbReference type="HAMAP-Rule" id="MF_01605"/>
    </source>
</evidence>
<proteinExistence type="inferred from homology"/>